<proteinExistence type="inferred from homology"/>
<name>HIS2_HALMA</name>
<feature type="chain" id="PRO_0000230196" description="Phosphoribosyl-ATP pyrophosphatase">
    <location>
        <begin position="1"/>
        <end position="98"/>
    </location>
</feature>
<organism>
    <name type="scientific">Haloarcula marismortui (strain ATCC 43049 / DSM 3752 / JCM 8966 / VKM B-1809)</name>
    <name type="common">Halobacterium marismortui</name>
    <dbReference type="NCBI Taxonomy" id="272569"/>
    <lineage>
        <taxon>Archaea</taxon>
        <taxon>Methanobacteriati</taxon>
        <taxon>Methanobacteriota</taxon>
        <taxon>Stenosarchaea group</taxon>
        <taxon>Halobacteria</taxon>
        <taxon>Halobacteriales</taxon>
        <taxon>Haloarculaceae</taxon>
        <taxon>Haloarcula</taxon>
    </lineage>
</organism>
<dbReference type="EC" id="3.6.1.31" evidence="1"/>
<dbReference type="EMBL" id="AY596297">
    <property type="protein sequence ID" value="AAV47187.1"/>
    <property type="molecule type" value="Genomic_DNA"/>
</dbReference>
<dbReference type="RefSeq" id="WP_004959048.1">
    <property type="nucleotide sequence ID" value="NZ_CP039138.1"/>
</dbReference>
<dbReference type="SMR" id="Q5UZW6"/>
<dbReference type="STRING" id="272569.rrnAC2371"/>
<dbReference type="PaxDb" id="272569-rrnAC2371"/>
<dbReference type="EnsemblBacteria" id="AAV47187">
    <property type="protein sequence ID" value="AAV47187"/>
    <property type="gene ID" value="rrnAC2371"/>
</dbReference>
<dbReference type="GeneID" id="64824353"/>
<dbReference type="KEGG" id="hma:rrnAC2371"/>
<dbReference type="PATRIC" id="fig|272569.17.peg.2987"/>
<dbReference type="eggNOG" id="arCOG02677">
    <property type="taxonomic scope" value="Archaea"/>
</dbReference>
<dbReference type="HOGENOM" id="CLU_123337_0_0_2"/>
<dbReference type="UniPathway" id="UPA00031">
    <property type="reaction ID" value="UER00007"/>
</dbReference>
<dbReference type="Proteomes" id="UP000001169">
    <property type="component" value="Chromosome I"/>
</dbReference>
<dbReference type="GO" id="GO:0005737">
    <property type="term" value="C:cytoplasm"/>
    <property type="evidence" value="ECO:0007669"/>
    <property type="project" value="UniProtKB-SubCell"/>
</dbReference>
<dbReference type="GO" id="GO:0005524">
    <property type="term" value="F:ATP binding"/>
    <property type="evidence" value="ECO:0007669"/>
    <property type="project" value="UniProtKB-KW"/>
</dbReference>
<dbReference type="GO" id="GO:0004636">
    <property type="term" value="F:phosphoribosyl-ATP diphosphatase activity"/>
    <property type="evidence" value="ECO:0007669"/>
    <property type="project" value="UniProtKB-UniRule"/>
</dbReference>
<dbReference type="GO" id="GO:0000105">
    <property type="term" value="P:L-histidine biosynthetic process"/>
    <property type="evidence" value="ECO:0007669"/>
    <property type="project" value="UniProtKB-UniRule"/>
</dbReference>
<dbReference type="CDD" id="cd11534">
    <property type="entry name" value="NTP-PPase_HisIE_like"/>
    <property type="match status" value="1"/>
</dbReference>
<dbReference type="Gene3D" id="1.10.287.1080">
    <property type="entry name" value="MazG-like"/>
    <property type="match status" value="1"/>
</dbReference>
<dbReference type="HAMAP" id="MF_01020">
    <property type="entry name" value="HisE"/>
    <property type="match status" value="1"/>
</dbReference>
<dbReference type="InterPro" id="IPR008179">
    <property type="entry name" value="HisE"/>
</dbReference>
<dbReference type="InterPro" id="IPR021130">
    <property type="entry name" value="PRib-ATP_PPHydrolase-like"/>
</dbReference>
<dbReference type="NCBIfam" id="TIGR03188">
    <property type="entry name" value="histidine_hisI"/>
    <property type="match status" value="1"/>
</dbReference>
<dbReference type="PANTHER" id="PTHR42945">
    <property type="entry name" value="HISTIDINE BIOSYNTHESIS BIFUNCTIONAL PROTEIN"/>
    <property type="match status" value="1"/>
</dbReference>
<dbReference type="PANTHER" id="PTHR42945:SF9">
    <property type="entry name" value="HISTIDINE BIOSYNTHESIS BIFUNCTIONAL PROTEIN HISIE"/>
    <property type="match status" value="1"/>
</dbReference>
<dbReference type="Pfam" id="PF01503">
    <property type="entry name" value="PRA-PH"/>
    <property type="match status" value="1"/>
</dbReference>
<dbReference type="SUPFAM" id="SSF101386">
    <property type="entry name" value="all-alpha NTP pyrophosphatases"/>
    <property type="match status" value="1"/>
</dbReference>
<keyword id="KW-0028">Amino-acid biosynthesis</keyword>
<keyword id="KW-0067">ATP-binding</keyword>
<keyword id="KW-0963">Cytoplasm</keyword>
<keyword id="KW-0368">Histidine biosynthesis</keyword>
<keyword id="KW-0378">Hydrolase</keyword>
<keyword id="KW-0547">Nucleotide-binding</keyword>
<keyword id="KW-1185">Reference proteome</keyword>
<evidence type="ECO:0000255" key="1">
    <source>
        <dbReference type="HAMAP-Rule" id="MF_01020"/>
    </source>
</evidence>
<protein>
    <recommendedName>
        <fullName evidence="1">Phosphoribosyl-ATP pyrophosphatase</fullName>
        <shortName evidence="1">PRA-PH</shortName>
        <ecNumber evidence="1">3.6.1.31</ecNumber>
    </recommendedName>
</protein>
<gene>
    <name evidence="1" type="primary">hisE</name>
    <name type="ordered locus">rrnAC2371</name>
</gene>
<reference key="1">
    <citation type="journal article" date="2004" name="Genome Res.">
        <title>Genome sequence of Haloarcula marismortui: a halophilic archaeon from the Dead Sea.</title>
        <authorList>
            <person name="Baliga N.S."/>
            <person name="Bonneau R."/>
            <person name="Facciotti M.T."/>
            <person name="Pan M."/>
            <person name="Glusman G."/>
            <person name="Deutsch E.W."/>
            <person name="Shannon P."/>
            <person name="Chiu Y."/>
            <person name="Weng R.S."/>
            <person name="Gan R.R."/>
            <person name="Hung P."/>
            <person name="Date S.V."/>
            <person name="Marcotte E."/>
            <person name="Hood L."/>
            <person name="Ng W.V."/>
        </authorList>
    </citation>
    <scope>NUCLEOTIDE SEQUENCE [LARGE SCALE GENOMIC DNA]</scope>
    <source>
        <strain>ATCC 43049 / DSM 3752 / JCM 8966 / VKM B-1809</strain>
    </source>
</reference>
<sequence length="98" mass="11036">MSDDTGDVIDELFAVIEDRKANLPEDSYTASLFTHEKGENAVLEKLGEETTELILAAKDDDTEELAHESADIVYHLLVLLSMKEMDIDDLRAELAKRR</sequence>
<accession>Q5UZW6</accession>
<comment type="catalytic activity">
    <reaction evidence="1">
        <text>1-(5-phospho-beta-D-ribosyl)-ATP + H2O = 1-(5-phospho-beta-D-ribosyl)-5'-AMP + diphosphate + H(+)</text>
        <dbReference type="Rhea" id="RHEA:22828"/>
        <dbReference type="ChEBI" id="CHEBI:15377"/>
        <dbReference type="ChEBI" id="CHEBI:15378"/>
        <dbReference type="ChEBI" id="CHEBI:33019"/>
        <dbReference type="ChEBI" id="CHEBI:59457"/>
        <dbReference type="ChEBI" id="CHEBI:73183"/>
        <dbReference type="EC" id="3.6.1.31"/>
    </reaction>
</comment>
<comment type="pathway">
    <text evidence="1">Amino-acid biosynthesis; L-histidine biosynthesis; L-histidine from 5-phospho-alpha-D-ribose 1-diphosphate: step 2/9.</text>
</comment>
<comment type="subcellular location">
    <subcellularLocation>
        <location evidence="1">Cytoplasm</location>
    </subcellularLocation>
</comment>
<comment type="similarity">
    <text evidence="1">Belongs to the PRA-PH family.</text>
</comment>